<gene>
    <name evidence="1" type="primary">folD</name>
    <name type="ordered locus">Jann_0983</name>
</gene>
<evidence type="ECO:0000255" key="1">
    <source>
        <dbReference type="HAMAP-Rule" id="MF_01576"/>
    </source>
</evidence>
<reference key="1">
    <citation type="submission" date="2006-02" db="EMBL/GenBank/DDBJ databases">
        <title>Complete sequence of chromosome of Jannaschia sp. CCS1.</title>
        <authorList>
            <consortium name="US DOE Joint Genome Institute"/>
            <person name="Copeland A."/>
            <person name="Lucas S."/>
            <person name="Lapidus A."/>
            <person name="Barry K."/>
            <person name="Detter J.C."/>
            <person name="Glavina del Rio T."/>
            <person name="Hammon N."/>
            <person name="Israni S."/>
            <person name="Pitluck S."/>
            <person name="Brettin T."/>
            <person name="Bruce D."/>
            <person name="Han C."/>
            <person name="Tapia R."/>
            <person name="Gilna P."/>
            <person name="Chertkov O."/>
            <person name="Saunders E."/>
            <person name="Schmutz J."/>
            <person name="Larimer F."/>
            <person name="Land M."/>
            <person name="Kyrpides N."/>
            <person name="Lykidis A."/>
            <person name="Moran M.A."/>
            <person name="Belas R."/>
            <person name="Ye W."/>
            <person name="Buchan A."/>
            <person name="Gonzalez J.M."/>
            <person name="Schell M.A."/>
            <person name="Richardson P."/>
        </authorList>
    </citation>
    <scope>NUCLEOTIDE SEQUENCE [LARGE SCALE GENOMIC DNA]</scope>
    <source>
        <strain>CCS1</strain>
    </source>
</reference>
<sequence length="308" mass="32248">MTEPQTNRTSGAKIIDGKAFAADVRGQVAGHVQRLKDEHGITPGLAVVLVGEDPASEVYVSHKHKATVEVGMTSFEHKLPADTSEDDLFALIDKLNADPAVHGILCQFPVPDHLDERRTVARISPAKDVDGLSVTNAGLLSSGGEALVSCTPLGCLMLLRAEFDSLSGKDAVVIGRSNLFGKPMAQLLLGDNCTVTIAHSRTKDLADVCRRADILVAAVGRAEMVRGDWIKPGATVIDVGISRVPHPDKPGKTKLIGDVHFAEAVDVAGAITPVPGGVGPMTIACLLANTVTACCRAHGLDEPRGLTA</sequence>
<keyword id="KW-0028">Amino-acid biosynthesis</keyword>
<keyword id="KW-0368">Histidine biosynthesis</keyword>
<keyword id="KW-0378">Hydrolase</keyword>
<keyword id="KW-0486">Methionine biosynthesis</keyword>
<keyword id="KW-0511">Multifunctional enzyme</keyword>
<keyword id="KW-0521">NADP</keyword>
<keyword id="KW-0554">One-carbon metabolism</keyword>
<keyword id="KW-0560">Oxidoreductase</keyword>
<keyword id="KW-0658">Purine biosynthesis</keyword>
<keyword id="KW-1185">Reference proteome</keyword>
<dbReference type="EC" id="1.5.1.5" evidence="1"/>
<dbReference type="EC" id="3.5.4.9" evidence="1"/>
<dbReference type="EMBL" id="CP000264">
    <property type="protein sequence ID" value="ABD53900.1"/>
    <property type="molecule type" value="Genomic_DNA"/>
</dbReference>
<dbReference type="RefSeq" id="WP_011454108.1">
    <property type="nucleotide sequence ID" value="NC_007802.1"/>
</dbReference>
<dbReference type="SMR" id="Q28TR2"/>
<dbReference type="STRING" id="290400.Jann_0983"/>
<dbReference type="KEGG" id="jan:Jann_0983"/>
<dbReference type="eggNOG" id="COG0190">
    <property type="taxonomic scope" value="Bacteria"/>
</dbReference>
<dbReference type="HOGENOM" id="CLU_034045_1_2_5"/>
<dbReference type="OrthoDB" id="9803580at2"/>
<dbReference type="UniPathway" id="UPA00193"/>
<dbReference type="Proteomes" id="UP000008326">
    <property type="component" value="Chromosome"/>
</dbReference>
<dbReference type="GO" id="GO:0005829">
    <property type="term" value="C:cytosol"/>
    <property type="evidence" value="ECO:0007669"/>
    <property type="project" value="TreeGrafter"/>
</dbReference>
<dbReference type="GO" id="GO:0004477">
    <property type="term" value="F:methenyltetrahydrofolate cyclohydrolase activity"/>
    <property type="evidence" value="ECO:0007669"/>
    <property type="project" value="UniProtKB-UniRule"/>
</dbReference>
<dbReference type="GO" id="GO:0004488">
    <property type="term" value="F:methylenetetrahydrofolate dehydrogenase (NADP+) activity"/>
    <property type="evidence" value="ECO:0007669"/>
    <property type="project" value="UniProtKB-UniRule"/>
</dbReference>
<dbReference type="GO" id="GO:0000105">
    <property type="term" value="P:L-histidine biosynthetic process"/>
    <property type="evidence" value="ECO:0007669"/>
    <property type="project" value="UniProtKB-KW"/>
</dbReference>
<dbReference type="GO" id="GO:0009086">
    <property type="term" value="P:methionine biosynthetic process"/>
    <property type="evidence" value="ECO:0007669"/>
    <property type="project" value="UniProtKB-KW"/>
</dbReference>
<dbReference type="GO" id="GO:0006164">
    <property type="term" value="P:purine nucleotide biosynthetic process"/>
    <property type="evidence" value="ECO:0007669"/>
    <property type="project" value="UniProtKB-KW"/>
</dbReference>
<dbReference type="GO" id="GO:0035999">
    <property type="term" value="P:tetrahydrofolate interconversion"/>
    <property type="evidence" value="ECO:0007669"/>
    <property type="project" value="UniProtKB-UniRule"/>
</dbReference>
<dbReference type="CDD" id="cd01080">
    <property type="entry name" value="NAD_bind_m-THF_DH_Cyclohyd"/>
    <property type="match status" value="1"/>
</dbReference>
<dbReference type="FunFam" id="3.40.50.720:FF:000006">
    <property type="entry name" value="Bifunctional protein FolD"/>
    <property type="match status" value="1"/>
</dbReference>
<dbReference type="FunFam" id="3.40.50.10860:FF:000005">
    <property type="entry name" value="C-1-tetrahydrofolate synthase, cytoplasmic, putative"/>
    <property type="match status" value="1"/>
</dbReference>
<dbReference type="Gene3D" id="3.40.50.10860">
    <property type="entry name" value="Leucine Dehydrogenase, chain A, domain 1"/>
    <property type="match status" value="1"/>
</dbReference>
<dbReference type="Gene3D" id="3.40.50.720">
    <property type="entry name" value="NAD(P)-binding Rossmann-like Domain"/>
    <property type="match status" value="1"/>
</dbReference>
<dbReference type="HAMAP" id="MF_01576">
    <property type="entry name" value="THF_DHG_CYH"/>
    <property type="match status" value="1"/>
</dbReference>
<dbReference type="InterPro" id="IPR046346">
    <property type="entry name" value="Aminoacid_DH-like_N_sf"/>
</dbReference>
<dbReference type="InterPro" id="IPR036291">
    <property type="entry name" value="NAD(P)-bd_dom_sf"/>
</dbReference>
<dbReference type="InterPro" id="IPR000672">
    <property type="entry name" value="THF_DH/CycHdrlase"/>
</dbReference>
<dbReference type="InterPro" id="IPR020630">
    <property type="entry name" value="THF_DH/CycHdrlase_cat_dom"/>
</dbReference>
<dbReference type="InterPro" id="IPR020867">
    <property type="entry name" value="THF_DH/CycHdrlase_CS"/>
</dbReference>
<dbReference type="InterPro" id="IPR020631">
    <property type="entry name" value="THF_DH/CycHdrlase_NAD-bd_dom"/>
</dbReference>
<dbReference type="NCBIfam" id="NF010783">
    <property type="entry name" value="PRK14186.1"/>
    <property type="match status" value="1"/>
</dbReference>
<dbReference type="NCBIfam" id="NF010785">
    <property type="entry name" value="PRK14188.1"/>
    <property type="match status" value="1"/>
</dbReference>
<dbReference type="PANTHER" id="PTHR48099:SF5">
    <property type="entry name" value="C-1-TETRAHYDROFOLATE SYNTHASE, CYTOPLASMIC"/>
    <property type="match status" value="1"/>
</dbReference>
<dbReference type="PANTHER" id="PTHR48099">
    <property type="entry name" value="C-1-TETRAHYDROFOLATE SYNTHASE, CYTOPLASMIC-RELATED"/>
    <property type="match status" value="1"/>
</dbReference>
<dbReference type="Pfam" id="PF00763">
    <property type="entry name" value="THF_DHG_CYH"/>
    <property type="match status" value="1"/>
</dbReference>
<dbReference type="Pfam" id="PF02882">
    <property type="entry name" value="THF_DHG_CYH_C"/>
    <property type="match status" value="1"/>
</dbReference>
<dbReference type="PRINTS" id="PR00085">
    <property type="entry name" value="THFDHDRGNASE"/>
</dbReference>
<dbReference type="SUPFAM" id="SSF53223">
    <property type="entry name" value="Aminoacid dehydrogenase-like, N-terminal domain"/>
    <property type="match status" value="1"/>
</dbReference>
<dbReference type="SUPFAM" id="SSF51735">
    <property type="entry name" value="NAD(P)-binding Rossmann-fold domains"/>
    <property type="match status" value="1"/>
</dbReference>
<dbReference type="PROSITE" id="PS00767">
    <property type="entry name" value="THF_DHG_CYH_2"/>
    <property type="match status" value="1"/>
</dbReference>
<proteinExistence type="inferred from homology"/>
<organism>
    <name type="scientific">Jannaschia sp. (strain CCS1)</name>
    <dbReference type="NCBI Taxonomy" id="290400"/>
    <lineage>
        <taxon>Bacteria</taxon>
        <taxon>Pseudomonadati</taxon>
        <taxon>Pseudomonadota</taxon>
        <taxon>Alphaproteobacteria</taxon>
        <taxon>Rhodobacterales</taxon>
        <taxon>Roseobacteraceae</taxon>
        <taxon>Jannaschia</taxon>
    </lineage>
</organism>
<protein>
    <recommendedName>
        <fullName evidence="1">Bifunctional protein FolD</fullName>
    </recommendedName>
    <domain>
        <recommendedName>
            <fullName evidence="1">Methylenetetrahydrofolate dehydrogenase</fullName>
            <ecNumber evidence="1">1.5.1.5</ecNumber>
        </recommendedName>
    </domain>
    <domain>
        <recommendedName>
            <fullName evidence="1">Methenyltetrahydrofolate cyclohydrolase</fullName>
            <ecNumber evidence="1">3.5.4.9</ecNumber>
        </recommendedName>
    </domain>
</protein>
<accession>Q28TR2</accession>
<name>FOLD_JANSC</name>
<comment type="function">
    <text evidence="1">Catalyzes the oxidation of 5,10-methylenetetrahydrofolate to 5,10-methenyltetrahydrofolate and then the hydrolysis of 5,10-methenyltetrahydrofolate to 10-formyltetrahydrofolate.</text>
</comment>
<comment type="catalytic activity">
    <reaction evidence="1">
        <text>(6R)-5,10-methylene-5,6,7,8-tetrahydrofolate + NADP(+) = (6R)-5,10-methenyltetrahydrofolate + NADPH</text>
        <dbReference type="Rhea" id="RHEA:22812"/>
        <dbReference type="ChEBI" id="CHEBI:15636"/>
        <dbReference type="ChEBI" id="CHEBI:57455"/>
        <dbReference type="ChEBI" id="CHEBI:57783"/>
        <dbReference type="ChEBI" id="CHEBI:58349"/>
        <dbReference type="EC" id="1.5.1.5"/>
    </reaction>
</comment>
<comment type="catalytic activity">
    <reaction evidence="1">
        <text>(6R)-5,10-methenyltetrahydrofolate + H2O = (6R)-10-formyltetrahydrofolate + H(+)</text>
        <dbReference type="Rhea" id="RHEA:23700"/>
        <dbReference type="ChEBI" id="CHEBI:15377"/>
        <dbReference type="ChEBI" id="CHEBI:15378"/>
        <dbReference type="ChEBI" id="CHEBI:57455"/>
        <dbReference type="ChEBI" id="CHEBI:195366"/>
        <dbReference type="EC" id="3.5.4.9"/>
    </reaction>
</comment>
<comment type="pathway">
    <text evidence="1">One-carbon metabolism; tetrahydrofolate interconversion.</text>
</comment>
<comment type="subunit">
    <text evidence="1">Homodimer.</text>
</comment>
<comment type="similarity">
    <text evidence="1">Belongs to the tetrahydrofolate dehydrogenase/cyclohydrolase family.</text>
</comment>
<feature type="chain" id="PRO_0000268372" description="Bifunctional protein FolD">
    <location>
        <begin position="1"/>
        <end position="308"/>
    </location>
</feature>
<feature type="binding site" evidence="1">
    <location>
        <begin position="175"/>
        <end position="177"/>
    </location>
    <ligand>
        <name>NADP(+)</name>
        <dbReference type="ChEBI" id="CHEBI:58349"/>
    </ligand>
</feature>
<feature type="binding site" evidence="1">
    <location>
        <position position="200"/>
    </location>
    <ligand>
        <name>NADP(+)</name>
        <dbReference type="ChEBI" id="CHEBI:58349"/>
    </ligand>
</feature>
<feature type="binding site" evidence="1">
    <location>
        <position position="241"/>
    </location>
    <ligand>
        <name>NADP(+)</name>
        <dbReference type="ChEBI" id="CHEBI:58349"/>
    </ligand>
</feature>